<protein>
    <recommendedName>
        <fullName>Zinc metalloproteinase-disintegrin-like cobrin</fullName>
        <ecNumber>3.4.24.-</ecNumber>
    </recommendedName>
    <alternativeName>
        <fullName>Snake venom metalloproteinase</fullName>
        <shortName>SVMP</shortName>
    </alternativeName>
</protein>
<comment type="function">
    <text evidence="5">Snake venom zinc metalloproteinase that may cleave complement protein C3 into C3c-like (C3o).</text>
</comment>
<comment type="cofactor">
    <cofactor evidence="1">
        <name>Zn(2+)</name>
        <dbReference type="ChEBI" id="CHEBI:29105"/>
    </cofactor>
    <text evidence="1">Binds 1 zinc ion per subunit.</text>
</comment>
<comment type="subunit">
    <text evidence="1">Monomer.</text>
</comment>
<comment type="subcellular location">
    <subcellularLocation>
        <location>Secreted</location>
    </subcellularLocation>
</comment>
<comment type="tissue specificity">
    <text>Expressed by the venom gland.</text>
</comment>
<comment type="similarity">
    <text evidence="6">Belongs to the venom metalloproteinase (M12B) family. P-III subfamily. P-IIIa sub-subfamily.</text>
</comment>
<organism>
    <name type="scientific">Naja kaouthia</name>
    <name type="common">Monocled cobra</name>
    <name type="synonym">Naja siamensis</name>
    <dbReference type="NCBI Taxonomy" id="8649"/>
    <lineage>
        <taxon>Eukaryota</taxon>
        <taxon>Metazoa</taxon>
        <taxon>Chordata</taxon>
        <taxon>Craniata</taxon>
        <taxon>Vertebrata</taxon>
        <taxon>Euteleostomi</taxon>
        <taxon>Lepidosauria</taxon>
        <taxon>Squamata</taxon>
        <taxon>Bifurcata</taxon>
        <taxon>Unidentata</taxon>
        <taxon>Episquamata</taxon>
        <taxon>Toxicofera</taxon>
        <taxon>Serpentes</taxon>
        <taxon>Colubroidea</taxon>
        <taxon>Elapidae</taxon>
        <taxon>Elapinae</taxon>
        <taxon>Naja</taxon>
    </lineage>
</organism>
<feature type="signal peptide" evidence="2">
    <location>
        <begin position="1"/>
        <end position="8"/>
    </location>
</feature>
<feature type="propeptide" id="PRO_0000418033" evidence="2">
    <location>
        <begin position="9"/>
        <end position="179"/>
    </location>
</feature>
<feature type="chain" id="PRO_0000418034" description="Zinc metalloproteinase-disintegrin-like cobrin">
    <location>
        <begin position="180"/>
        <end position="600"/>
    </location>
</feature>
<feature type="domain" description="Peptidase M12B" evidence="4">
    <location>
        <begin position="193"/>
        <end position="388"/>
    </location>
</feature>
<feature type="domain" description="Disintegrin" evidence="3">
    <location>
        <begin position="396"/>
        <end position="482"/>
    </location>
</feature>
<feature type="short sequence motif" description="D/ECD-tripeptide">
    <location>
        <begin position="460"/>
        <end position="462"/>
    </location>
</feature>
<feature type="binding site" evidence="1">
    <location>
        <position position="196"/>
    </location>
    <ligand>
        <name>Ca(2+)</name>
        <dbReference type="ChEBI" id="CHEBI:29108"/>
        <label>1</label>
    </ligand>
</feature>
<feature type="binding site" evidence="1">
    <location>
        <position position="280"/>
    </location>
    <ligand>
        <name>Ca(2+)</name>
        <dbReference type="ChEBI" id="CHEBI:29108"/>
        <label>1</label>
    </ligand>
</feature>
<feature type="binding site" evidence="1">
    <location>
        <position position="329"/>
    </location>
    <ligand>
        <name>Zn(2+)</name>
        <dbReference type="ChEBI" id="CHEBI:29105"/>
        <note>catalytic</note>
    </ligand>
</feature>
<feature type="binding site" evidence="1">
    <location>
        <position position="333"/>
    </location>
    <ligand>
        <name>Zn(2+)</name>
        <dbReference type="ChEBI" id="CHEBI:29105"/>
        <note>catalytic</note>
    </ligand>
</feature>
<feature type="binding site" evidence="1">
    <location>
        <position position="339"/>
    </location>
    <ligand>
        <name>Zn(2+)</name>
        <dbReference type="ChEBI" id="CHEBI:29105"/>
        <note>catalytic</note>
    </ligand>
</feature>
<feature type="binding site" evidence="1">
    <location>
        <position position="383"/>
    </location>
    <ligand>
        <name>Ca(2+)</name>
        <dbReference type="ChEBI" id="CHEBI:29108"/>
        <label>1</label>
    </ligand>
</feature>
<feature type="binding site" evidence="1">
    <location>
        <position position="386"/>
    </location>
    <ligand>
        <name>Ca(2+)</name>
        <dbReference type="ChEBI" id="CHEBI:29108"/>
        <label>1</label>
    </ligand>
</feature>
<feature type="binding site" evidence="1">
    <location>
        <position position="398"/>
    </location>
    <ligand>
        <name>Ca(2+)</name>
        <dbReference type="ChEBI" id="CHEBI:29108"/>
        <label>2</label>
    </ligand>
</feature>
<feature type="binding site" evidence="1">
    <location>
        <position position="401"/>
    </location>
    <ligand>
        <name>Ca(2+)</name>
        <dbReference type="ChEBI" id="CHEBI:29108"/>
        <label>2</label>
    </ligand>
</feature>
<feature type="binding site" evidence="1">
    <location>
        <position position="403"/>
    </location>
    <ligand>
        <name>Ca(2+)</name>
        <dbReference type="ChEBI" id="CHEBI:29108"/>
        <label>2</label>
    </ligand>
</feature>
<feature type="binding site" evidence="1">
    <location>
        <position position="405"/>
    </location>
    <ligand>
        <name>Ca(2+)</name>
        <dbReference type="ChEBI" id="CHEBI:29108"/>
        <label>2</label>
    </ligand>
</feature>
<feature type="binding site" evidence="1">
    <location>
        <position position="408"/>
    </location>
    <ligand>
        <name>Ca(2+)</name>
        <dbReference type="ChEBI" id="CHEBI:29108"/>
        <label>2</label>
    </ligand>
</feature>
<feature type="binding site" evidence="1">
    <location>
        <position position="411"/>
    </location>
    <ligand>
        <name>Ca(2+)</name>
        <dbReference type="ChEBI" id="CHEBI:29108"/>
        <label>2</label>
    </ligand>
</feature>
<feature type="binding site" evidence="1">
    <location>
        <position position="462"/>
    </location>
    <ligand>
        <name>Ca(2+)</name>
        <dbReference type="ChEBI" id="CHEBI:29108"/>
        <label>3</label>
    </ligand>
</feature>
<feature type="binding site" evidence="1">
    <location>
        <position position="463"/>
    </location>
    <ligand>
        <name>Ca(2+)</name>
        <dbReference type="ChEBI" id="CHEBI:29108"/>
        <label>3</label>
    </ligand>
</feature>
<feature type="binding site" evidence="1">
    <location>
        <position position="465"/>
    </location>
    <ligand>
        <name>Ca(2+)</name>
        <dbReference type="ChEBI" id="CHEBI:29108"/>
        <label>3</label>
    </ligand>
</feature>
<feature type="binding site" evidence="1">
    <location>
        <position position="477"/>
    </location>
    <ligand>
        <name>Ca(2+)</name>
        <dbReference type="ChEBI" id="CHEBI:29108"/>
        <label>3</label>
    </ligand>
</feature>
<feature type="binding site" evidence="1">
    <location>
        <position position="478"/>
    </location>
    <ligand>
        <name>Ca(2+)</name>
        <dbReference type="ChEBI" id="CHEBI:29108"/>
        <label>3</label>
    </ligand>
</feature>
<feature type="glycosylation site" description="N-linked (GlcNAc...) asparagine" evidence="2">
    <location>
        <position position="424"/>
    </location>
</feature>
<feature type="disulfide bond" evidence="1">
    <location>
        <begin position="304"/>
        <end position="383"/>
    </location>
</feature>
<feature type="disulfide bond" evidence="1">
    <location>
        <begin position="344"/>
        <end position="367"/>
    </location>
</feature>
<feature type="disulfide bond" evidence="1">
    <location>
        <begin position="346"/>
        <end position="351"/>
    </location>
</feature>
<feature type="disulfide bond" evidence="1">
    <location>
        <begin position="399"/>
        <end position="428"/>
    </location>
</feature>
<feature type="disulfide bond" evidence="1">
    <location>
        <begin position="410"/>
        <end position="423"/>
    </location>
</feature>
<feature type="disulfide bond" evidence="1">
    <location>
        <begin position="412"/>
        <end position="418"/>
    </location>
</feature>
<feature type="disulfide bond" evidence="1">
    <location>
        <begin position="422"/>
        <end position="445"/>
    </location>
</feature>
<feature type="disulfide bond" evidence="1">
    <location>
        <begin position="436"/>
        <end position="442"/>
    </location>
</feature>
<feature type="disulfide bond" evidence="1">
    <location>
        <begin position="441"/>
        <end position="467"/>
    </location>
</feature>
<feature type="disulfide bond" evidence="1">
    <location>
        <begin position="454"/>
        <end position="474"/>
    </location>
</feature>
<feature type="disulfide bond" evidence="1">
    <location>
        <begin position="461"/>
        <end position="492"/>
    </location>
</feature>
<feature type="disulfide bond" evidence="1">
    <location>
        <begin position="486"/>
        <end position="497"/>
    </location>
</feature>
<feature type="disulfide bond" evidence="1">
    <location>
        <begin position="504"/>
        <end position="554"/>
    </location>
</feature>
<feature type="disulfide bond" evidence="1">
    <location>
        <begin position="519"/>
        <end position="562"/>
    </location>
</feature>
<feature type="disulfide bond" evidence="1">
    <location>
        <begin position="532"/>
        <end position="542"/>
    </location>
</feature>
<feature type="disulfide bond" evidence="1">
    <location>
        <begin position="549"/>
        <end position="588"/>
    </location>
</feature>
<feature type="disulfide bond" evidence="1">
    <location>
        <begin position="582"/>
        <end position="593"/>
    </location>
</feature>
<dbReference type="EC" id="3.4.24.-"/>
<dbReference type="EMBL" id="AF063190">
    <property type="protein sequence ID" value="AAF00693.1"/>
    <property type="molecule type" value="mRNA"/>
</dbReference>
<dbReference type="SMR" id="Q9PVK7"/>
<dbReference type="MEROPS" id="M12.159"/>
<dbReference type="GO" id="GO:0005576">
    <property type="term" value="C:extracellular region"/>
    <property type="evidence" value="ECO:0007669"/>
    <property type="project" value="UniProtKB-SubCell"/>
</dbReference>
<dbReference type="GO" id="GO:0005886">
    <property type="term" value="C:plasma membrane"/>
    <property type="evidence" value="ECO:0007669"/>
    <property type="project" value="TreeGrafter"/>
</dbReference>
<dbReference type="GO" id="GO:0046872">
    <property type="term" value="F:metal ion binding"/>
    <property type="evidence" value="ECO:0007669"/>
    <property type="project" value="UniProtKB-KW"/>
</dbReference>
<dbReference type="GO" id="GO:0004222">
    <property type="term" value="F:metalloendopeptidase activity"/>
    <property type="evidence" value="ECO:0007669"/>
    <property type="project" value="InterPro"/>
</dbReference>
<dbReference type="GO" id="GO:0090729">
    <property type="term" value="F:toxin activity"/>
    <property type="evidence" value="ECO:0007669"/>
    <property type="project" value="UniProtKB-KW"/>
</dbReference>
<dbReference type="GO" id="GO:0006508">
    <property type="term" value="P:proteolysis"/>
    <property type="evidence" value="ECO:0007669"/>
    <property type="project" value="UniProtKB-KW"/>
</dbReference>
<dbReference type="CDD" id="cd04269">
    <property type="entry name" value="ZnMc_adamalysin_II_like"/>
    <property type="match status" value="1"/>
</dbReference>
<dbReference type="FunFam" id="3.40.390.10:FF:000002">
    <property type="entry name" value="Disintegrin and metalloproteinase domain-containing protein 22"/>
    <property type="match status" value="1"/>
</dbReference>
<dbReference type="FunFam" id="4.10.70.10:FF:000001">
    <property type="entry name" value="Disintegrin and metalloproteinase domain-containing protein 22"/>
    <property type="match status" value="1"/>
</dbReference>
<dbReference type="Gene3D" id="3.40.390.10">
    <property type="entry name" value="Collagenase (Catalytic Domain)"/>
    <property type="match status" value="1"/>
</dbReference>
<dbReference type="Gene3D" id="4.10.70.10">
    <property type="entry name" value="Disintegrin domain"/>
    <property type="match status" value="1"/>
</dbReference>
<dbReference type="InterPro" id="IPR006586">
    <property type="entry name" value="ADAM_Cys-rich"/>
</dbReference>
<dbReference type="InterPro" id="IPR001762">
    <property type="entry name" value="Disintegrin_dom"/>
</dbReference>
<dbReference type="InterPro" id="IPR036436">
    <property type="entry name" value="Disintegrin_dom_sf"/>
</dbReference>
<dbReference type="InterPro" id="IPR024079">
    <property type="entry name" value="MetalloPept_cat_dom_sf"/>
</dbReference>
<dbReference type="InterPro" id="IPR001590">
    <property type="entry name" value="Peptidase_M12B"/>
</dbReference>
<dbReference type="InterPro" id="IPR002870">
    <property type="entry name" value="Peptidase_M12B_N"/>
</dbReference>
<dbReference type="InterPro" id="IPR034027">
    <property type="entry name" value="Reprolysin_adamalysin"/>
</dbReference>
<dbReference type="PANTHER" id="PTHR11905">
    <property type="entry name" value="ADAM A DISINTEGRIN AND METALLOPROTEASE DOMAIN"/>
    <property type="match status" value="1"/>
</dbReference>
<dbReference type="PANTHER" id="PTHR11905:SF32">
    <property type="entry name" value="DISINTEGRIN AND METALLOPROTEINASE DOMAIN-CONTAINING PROTEIN 28"/>
    <property type="match status" value="1"/>
</dbReference>
<dbReference type="Pfam" id="PF08516">
    <property type="entry name" value="ADAM_CR"/>
    <property type="match status" value="1"/>
</dbReference>
<dbReference type="Pfam" id="PF00200">
    <property type="entry name" value="Disintegrin"/>
    <property type="match status" value="1"/>
</dbReference>
<dbReference type="Pfam" id="PF01562">
    <property type="entry name" value="Pep_M12B_propep"/>
    <property type="match status" value="1"/>
</dbReference>
<dbReference type="Pfam" id="PF01421">
    <property type="entry name" value="Reprolysin"/>
    <property type="match status" value="1"/>
</dbReference>
<dbReference type="PRINTS" id="PR00289">
    <property type="entry name" value="DISINTEGRIN"/>
</dbReference>
<dbReference type="SMART" id="SM00608">
    <property type="entry name" value="ACR"/>
    <property type="match status" value="1"/>
</dbReference>
<dbReference type="SMART" id="SM00050">
    <property type="entry name" value="DISIN"/>
    <property type="match status" value="1"/>
</dbReference>
<dbReference type="SUPFAM" id="SSF57552">
    <property type="entry name" value="Blood coagulation inhibitor (disintegrin)"/>
    <property type="match status" value="1"/>
</dbReference>
<dbReference type="SUPFAM" id="SSF55486">
    <property type="entry name" value="Metalloproteases ('zincins'), catalytic domain"/>
    <property type="match status" value="1"/>
</dbReference>
<dbReference type="PROSITE" id="PS50215">
    <property type="entry name" value="ADAM_MEPRO"/>
    <property type="match status" value="1"/>
</dbReference>
<dbReference type="PROSITE" id="PS50214">
    <property type="entry name" value="DISINTEGRIN_2"/>
    <property type="match status" value="1"/>
</dbReference>
<dbReference type="PROSITE" id="PS00142">
    <property type="entry name" value="ZINC_PROTEASE"/>
    <property type="match status" value="1"/>
</dbReference>
<keyword id="KW-0106">Calcium</keyword>
<keyword id="KW-1216">Complement system impairing toxin</keyword>
<keyword id="KW-1015">Disulfide bond</keyword>
<keyword id="KW-0325">Glycoprotein</keyword>
<keyword id="KW-0378">Hydrolase</keyword>
<keyword id="KW-0479">Metal-binding</keyword>
<keyword id="KW-0482">Metalloprotease</keyword>
<keyword id="KW-0645">Protease</keyword>
<keyword id="KW-0964">Secreted</keyword>
<keyword id="KW-0732">Signal</keyword>
<keyword id="KW-0800">Toxin</keyword>
<keyword id="KW-0862">Zinc</keyword>
<keyword id="KW-0865">Zymogen</keyword>
<sequence length="600" mass="67662">MIQLSWSSIILESGNVNDYEVVYPQKVPALLKGGVQNPQPETKYEDTMQYEFQVNGEPVVLHLERNKGLFSEDYTETHYAPDGREITTSPPVQDHCYYHGYFQNEADSSAVISACDGLKGHFKLQGEIYFIEPLKISDSEAHAIYKDENVEEEDETPKICGVTDTTWESDEPIKKTSLLTNTPEQDRYLQAEKYIEFYMVVDNIMYRHYKRNQLVIKRKVYEMINTMNMIYRRLNFHIALIGLEIWSNINEINVQSDVKATLDLFGEWREKKLLPRKRNDNAQLLTGIDFNGTPVGLAYIGSICNPKTSAAVVQDYSKSTRMVAITMAHEMGHNLGMNHDKGFCTCGFNKCVMSTRRTKPAYQFSSCSVREHQRYLLRDRPQCILNKPLSTDIVSPPICGNYFVEVGEECDCGSPADCQSACCNATTCKLQHEAQCDSEECCEKCKFKGAGAECRAAKDDCDLPELCTGQSAECPTDVFQRNGLPCQNNGYCYNGKCPIMTNQCIALRGPGVKVSRDSCFTLNQRTRGCGLCRMEYGRKIPCAAKDVKCGRLFCKKRNSMICNCSISPRDPSYGMVEPGTKCGDGMVCSNRQCVDVKTAY</sequence>
<accession>Q9PVK7</accession>
<name>VM3_NAJKA</name>
<reference key="1">
    <citation type="submission" date="1998-05" db="EMBL/GenBank/DDBJ databases">
        <authorList>
            <person name="Bambai B."/>
            <person name="Bredehorst R."/>
            <person name="Vogel C.-W."/>
        </authorList>
    </citation>
    <scope>NUCLEOTIDE SEQUENCE [MRNA]</scope>
    <source>
        <tissue>Venom gland</tissue>
    </source>
</reference>
<reference key="2">
    <citation type="journal article" date="1988" name="J. Biol. Chem.">
        <title>A novel cleavage product of human complement component C3 with structural and functional properties of cobra venom factor.</title>
        <authorList>
            <person name="O'Keefe M.C."/>
            <person name="Caporale L.H."/>
            <person name="Vogel C.-W."/>
        </authorList>
    </citation>
    <scope>FUNCTION</scope>
</reference>
<reference key="3">
    <citation type="journal article" date="2010" name="Toxicon">
        <title>Cobra venom factor: Structure, function, and humanization for therapeutic complement depletion.</title>
        <authorList>
            <person name="Vogel C.-W."/>
            <person name="Fritzinger D.C."/>
        </authorList>
    </citation>
    <scope>REVIEW</scope>
</reference>
<evidence type="ECO:0000250" key="1"/>
<evidence type="ECO:0000255" key="2"/>
<evidence type="ECO:0000255" key="3">
    <source>
        <dbReference type="PROSITE-ProRule" id="PRU00068"/>
    </source>
</evidence>
<evidence type="ECO:0000255" key="4">
    <source>
        <dbReference type="PROSITE-ProRule" id="PRU00276"/>
    </source>
</evidence>
<evidence type="ECO:0000269" key="5">
    <source>
    </source>
</evidence>
<evidence type="ECO:0000305" key="6"/>
<proteinExistence type="evidence at transcript level"/>